<reference key="1">
    <citation type="journal article" date="2000" name="Science">
        <title>The genome sequence of Drosophila melanogaster.</title>
        <authorList>
            <person name="Adams M.D."/>
            <person name="Celniker S.E."/>
            <person name="Holt R.A."/>
            <person name="Evans C.A."/>
            <person name="Gocayne J.D."/>
            <person name="Amanatides P.G."/>
            <person name="Scherer S.E."/>
            <person name="Li P.W."/>
            <person name="Hoskins R.A."/>
            <person name="Galle R.F."/>
            <person name="George R.A."/>
            <person name="Lewis S.E."/>
            <person name="Richards S."/>
            <person name="Ashburner M."/>
            <person name="Henderson S.N."/>
            <person name="Sutton G.G."/>
            <person name="Wortman J.R."/>
            <person name="Yandell M.D."/>
            <person name="Zhang Q."/>
            <person name="Chen L.X."/>
            <person name="Brandon R.C."/>
            <person name="Rogers Y.-H.C."/>
            <person name="Blazej R.G."/>
            <person name="Champe M."/>
            <person name="Pfeiffer B.D."/>
            <person name="Wan K.H."/>
            <person name="Doyle C."/>
            <person name="Baxter E.G."/>
            <person name="Helt G."/>
            <person name="Nelson C.R."/>
            <person name="Miklos G.L.G."/>
            <person name="Abril J.F."/>
            <person name="Agbayani A."/>
            <person name="An H.-J."/>
            <person name="Andrews-Pfannkoch C."/>
            <person name="Baldwin D."/>
            <person name="Ballew R.M."/>
            <person name="Basu A."/>
            <person name="Baxendale J."/>
            <person name="Bayraktaroglu L."/>
            <person name="Beasley E.M."/>
            <person name="Beeson K.Y."/>
            <person name="Benos P.V."/>
            <person name="Berman B.P."/>
            <person name="Bhandari D."/>
            <person name="Bolshakov S."/>
            <person name="Borkova D."/>
            <person name="Botchan M.R."/>
            <person name="Bouck J."/>
            <person name="Brokstein P."/>
            <person name="Brottier P."/>
            <person name="Burtis K.C."/>
            <person name="Busam D.A."/>
            <person name="Butler H."/>
            <person name="Cadieu E."/>
            <person name="Center A."/>
            <person name="Chandra I."/>
            <person name="Cherry J.M."/>
            <person name="Cawley S."/>
            <person name="Dahlke C."/>
            <person name="Davenport L.B."/>
            <person name="Davies P."/>
            <person name="de Pablos B."/>
            <person name="Delcher A."/>
            <person name="Deng Z."/>
            <person name="Mays A.D."/>
            <person name="Dew I."/>
            <person name="Dietz S.M."/>
            <person name="Dodson K."/>
            <person name="Doup L.E."/>
            <person name="Downes M."/>
            <person name="Dugan-Rocha S."/>
            <person name="Dunkov B.C."/>
            <person name="Dunn P."/>
            <person name="Durbin K.J."/>
            <person name="Evangelista C.C."/>
            <person name="Ferraz C."/>
            <person name="Ferriera S."/>
            <person name="Fleischmann W."/>
            <person name="Fosler C."/>
            <person name="Gabrielian A.E."/>
            <person name="Garg N.S."/>
            <person name="Gelbart W.M."/>
            <person name="Glasser K."/>
            <person name="Glodek A."/>
            <person name="Gong F."/>
            <person name="Gorrell J.H."/>
            <person name="Gu Z."/>
            <person name="Guan P."/>
            <person name="Harris M."/>
            <person name="Harris N.L."/>
            <person name="Harvey D.A."/>
            <person name="Heiman T.J."/>
            <person name="Hernandez J.R."/>
            <person name="Houck J."/>
            <person name="Hostin D."/>
            <person name="Houston K.A."/>
            <person name="Howland T.J."/>
            <person name="Wei M.-H."/>
            <person name="Ibegwam C."/>
            <person name="Jalali M."/>
            <person name="Kalush F."/>
            <person name="Karpen G.H."/>
            <person name="Ke Z."/>
            <person name="Kennison J.A."/>
            <person name="Ketchum K.A."/>
            <person name="Kimmel B.E."/>
            <person name="Kodira C.D."/>
            <person name="Kraft C.L."/>
            <person name="Kravitz S."/>
            <person name="Kulp D."/>
            <person name="Lai Z."/>
            <person name="Lasko P."/>
            <person name="Lei Y."/>
            <person name="Levitsky A.A."/>
            <person name="Li J.H."/>
            <person name="Li Z."/>
            <person name="Liang Y."/>
            <person name="Lin X."/>
            <person name="Liu X."/>
            <person name="Mattei B."/>
            <person name="McIntosh T.C."/>
            <person name="McLeod M.P."/>
            <person name="McPherson D."/>
            <person name="Merkulov G."/>
            <person name="Milshina N.V."/>
            <person name="Mobarry C."/>
            <person name="Morris J."/>
            <person name="Moshrefi A."/>
            <person name="Mount S.M."/>
            <person name="Moy M."/>
            <person name="Murphy B."/>
            <person name="Murphy L."/>
            <person name="Muzny D.M."/>
            <person name="Nelson D.L."/>
            <person name="Nelson D.R."/>
            <person name="Nelson K.A."/>
            <person name="Nixon K."/>
            <person name="Nusskern D.R."/>
            <person name="Pacleb J.M."/>
            <person name="Palazzolo M."/>
            <person name="Pittman G.S."/>
            <person name="Pan S."/>
            <person name="Pollard J."/>
            <person name="Puri V."/>
            <person name="Reese M.G."/>
            <person name="Reinert K."/>
            <person name="Remington K."/>
            <person name="Saunders R.D.C."/>
            <person name="Scheeler F."/>
            <person name="Shen H."/>
            <person name="Shue B.C."/>
            <person name="Siden-Kiamos I."/>
            <person name="Simpson M."/>
            <person name="Skupski M.P."/>
            <person name="Smith T.J."/>
            <person name="Spier E."/>
            <person name="Spradling A.C."/>
            <person name="Stapleton M."/>
            <person name="Strong R."/>
            <person name="Sun E."/>
            <person name="Svirskas R."/>
            <person name="Tector C."/>
            <person name="Turner R."/>
            <person name="Venter E."/>
            <person name="Wang A.H."/>
            <person name="Wang X."/>
            <person name="Wang Z.-Y."/>
            <person name="Wassarman D.A."/>
            <person name="Weinstock G.M."/>
            <person name="Weissenbach J."/>
            <person name="Williams S.M."/>
            <person name="Woodage T."/>
            <person name="Worley K.C."/>
            <person name="Wu D."/>
            <person name="Yang S."/>
            <person name="Yao Q.A."/>
            <person name="Ye J."/>
            <person name="Yeh R.-F."/>
            <person name="Zaveri J.S."/>
            <person name="Zhan M."/>
            <person name="Zhang G."/>
            <person name="Zhao Q."/>
            <person name="Zheng L."/>
            <person name="Zheng X.H."/>
            <person name="Zhong F.N."/>
            <person name="Zhong W."/>
            <person name="Zhou X."/>
            <person name="Zhu S.C."/>
            <person name="Zhu X."/>
            <person name="Smith H.O."/>
            <person name="Gibbs R.A."/>
            <person name="Myers E.W."/>
            <person name="Rubin G.M."/>
            <person name="Venter J.C."/>
        </authorList>
    </citation>
    <scope>NUCLEOTIDE SEQUENCE [LARGE SCALE GENOMIC DNA]</scope>
    <source>
        <strain>Berkeley</strain>
    </source>
</reference>
<reference key="2">
    <citation type="journal article" date="2002" name="Genome Biol.">
        <title>Annotation of the Drosophila melanogaster euchromatic genome: a systematic review.</title>
        <authorList>
            <person name="Misra S."/>
            <person name="Crosby M.A."/>
            <person name="Mungall C.J."/>
            <person name="Matthews B.B."/>
            <person name="Campbell K.S."/>
            <person name="Hradecky P."/>
            <person name="Huang Y."/>
            <person name="Kaminker J.S."/>
            <person name="Millburn G.H."/>
            <person name="Prochnik S.E."/>
            <person name="Smith C.D."/>
            <person name="Tupy J.L."/>
            <person name="Whitfield E.J."/>
            <person name="Bayraktaroglu L."/>
            <person name="Berman B.P."/>
            <person name="Bettencourt B.R."/>
            <person name="Celniker S.E."/>
            <person name="de Grey A.D.N.J."/>
            <person name="Drysdale R.A."/>
            <person name="Harris N.L."/>
            <person name="Richter J."/>
            <person name="Russo S."/>
            <person name="Schroeder A.J."/>
            <person name="Shu S.Q."/>
            <person name="Stapleton M."/>
            <person name="Yamada C."/>
            <person name="Ashburner M."/>
            <person name="Gelbart W.M."/>
            <person name="Rubin G.M."/>
            <person name="Lewis S.E."/>
        </authorList>
    </citation>
    <scope>GENOME REANNOTATION</scope>
    <source>
        <strain>Berkeley</strain>
    </source>
</reference>
<reference key="3">
    <citation type="submission" date="2003-08" db="EMBL/GenBank/DDBJ databases">
        <authorList>
            <person name="Stapleton M."/>
            <person name="Brokstein P."/>
            <person name="Hong L."/>
            <person name="Agbayani A."/>
            <person name="Carlson J.W."/>
            <person name="Champe M."/>
            <person name="Chavez C."/>
            <person name="Dorsett V."/>
            <person name="Dresnek D."/>
            <person name="Farfan D."/>
            <person name="Frise E."/>
            <person name="George R.A."/>
            <person name="Gonzalez M."/>
            <person name="Guarin H."/>
            <person name="Kronmiller B."/>
            <person name="Li P.W."/>
            <person name="Liao G."/>
            <person name="Miranda A."/>
            <person name="Mungall C.J."/>
            <person name="Nunoo J."/>
            <person name="Pacleb J.M."/>
            <person name="Paragas V."/>
            <person name="Park S."/>
            <person name="Patel S."/>
            <person name="Phouanenavong S."/>
            <person name="Wan K.H."/>
            <person name="Yu C."/>
            <person name="Lewis S.E."/>
            <person name="Rubin G.M."/>
            <person name="Celniker S.E."/>
        </authorList>
    </citation>
    <scope>NUCLEOTIDE SEQUENCE [LARGE SCALE MRNA]</scope>
    <source>
        <strain>Berkeley</strain>
        <tissue>Embryo</tissue>
    </source>
</reference>
<reference key="4">
    <citation type="journal article" date="2008" name="J. Proteome Res.">
        <title>Phosphoproteome analysis of Drosophila melanogaster embryos.</title>
        <authorList>
            <person name="Zhai B."/>
            <person name="Villen J."/>
            <person name="Beausoleil S.A."/>
            <person name="Mintseris J."/>
            <person name="Gygi S.P."/>
        </authorList>
    </citation>
    <scope>PHOSPHORYLATION [LARGE SCALE ANALYSIS] AT TYR-53; SER-58 AND SER-79</scope>
    <scope>IDENTIFICATION BY MASS SPECTROMETRY</scope>
    <source>
        <tissue>Embryo</tissue>
    </source>
</reference>
<proteinExistence type="evidence at protein level"/>
<feature type="chain" id="PRO_0000226790" description="JmjC domain-containing histone demethylation protein 1">
    <location>
        <begin position="1"/>
        <end position="1345"/>
    </location>
</feature>
<feature type="domain" description="JmjC" evidence="4">
    <location>
        <begin position="180"/>
        <end position="348"/>
    </location>
</feature>
<feature type="domain" description="F-box">
    <location>
        <begin position="1059"/>
        <end position="1105"/>
    </location>
</feature>
<feature type="zinc finger region" description="CXXC-type" evidence="3">
    <location>
        <begin position="671"/>
        <end position="717"/>
    </location>
</feature>
<feature type="region of interest" description="Disordered" evidence="5">
    <location>
        <begin position="1"/>
        <end position="44"/>
    </location>
</feature>
<feature type="region of interest" description="Disordered" evidence="5">
    <location>
        <begin position="503"/>
        <end position="522"/>
    </location>
</feature>
<feature type="region of interest" description="Disordered" evidence="5">
    <location>
        <begin position="816"/>
        <end position="848"/>
    </location>
</feature>
<feature type="region of interest" description="Disordered" evidence="5">
    <location>
        <begin position="876"/>
        <end position="1053"/>
    </location>
</feature>
<feature type="compositionally biased region" description="Low complexity" evidence="5">
    <location>
        <begin position="8"/>
        <end position="37"/>
    </location>
</feature>
<feature type="compositionally biased region" description="Basic and acidic residues" evidence="5">
    <location>
        <begin position="885"/>
        <end position="894"/>
    </location>
</feature>
<feature type="compositionally biased region" description="Polar residues" evidence="5">
    <location>
        <begin position="973"/>
        <end position="987"/>
    </location>
</feature>
<feature type="compositionally biased region" description="Low complexity" evidence="5">
    <location>
        <begin position="999"/>
        <end position="1025"/>
    </location>
</feature>
<feature type="compositionally biased region" description="Gly residues" evidence="5">
    <location>
        <begin position="1034"/>
        <end position="1051"/>
    </location>
</feature>
<feature type="binding site" evidence="1">
    <location>
        <position position="241"/>
    </location>
    <ligand>
        <name>substrate</name>
    </ligand>
</feature>
<feature type="binding site" evidence="4">
    <location>
        <position position="244"/>
    </location>
    <ligand>
        <name>Fe cation</name>
        <dbReference type="ChEBI" id="CHEBI:24875"/>
        <note>catalytic</note>
    </ligand>
</feature>
<feature type="binding site" evidence="4">
    <location>
        <position position="246"/>
    </location>
    <ligand>
        <name>Fe cation</name>
        <dbReference type="ChEBI" id="CHEBI:24875"/>
        <note>catalytic</note>
    </ligand>
</feature>
<feature type="binding site" evidence="1">
    <location>
        <position position="261"/>
    </location>
    <ligand>
        <name>substrate</name>
    </ligand>
</feature>
<feature type="binding site" evidence="4">
    <location>
        <position position="316"/>
    </location>
    <ligand>
        <name>Fe cation</name>
        <dbReference type="ChEBI" id="CHEBI:24875"/>
        <note>catalytic</note>
    </ligand>
</feature>
<feature type="binding site" evidence="3">
    <location>
        <position position="678"/>
    </location>
    <ligand>
        <name>Zn(2+)</name>
        <dbReference type="ChEBI" id="CHEBI:29105"/>
        <label>1</label>
    </ligand>
</feature>
<feature type="binding site" evidence="3">
    <location>
        <position position="681"/>
    </location>
    <ligand>
        <name>Zn(2+)</name>
        <dbReference type="ChEBI" id="CHEBI:29105"/>
        <label>1</label>
    </ligand>
</feature>
<feature type="binding site" evidence="3">
    <location>
        <position position="684"/>
    </location>
    <ligand>
        <name>Zn(2+)</name>
        <dbReference type="ChEBI" id="CHEBI:29105"/>
        <label>1</label>
    </ligand>
</feature>
<feature type="binding site" evidence="3">
    <location>
        <position position="689"/>
    </location>
    <ligand>
        <name>Zn(2+)</name>
        <dbReference type="ChEBI" id="CHEBI:29105"/>
        <label>2</label>
    </ligand>
</feature>
<feature type="binding site" evidence="3">
    <location>
        <position position="692"/>
    </location>
    <ligand>
        <name>Zn(2+)</name>
        <dbReference type="ChEBI" id="CHEBI:29105"/>
        <label>2</label>
    </ligand>
</feature>
<feature type="binding site" evidence="3">
    <location>
        <position position="695"/>
    </location>
    <ligand>
        <name>Zn(2+)</name>
        <dbReference type="ChEBI" id="CHEBI:29105"/>
        <label>2</label>
    </ligand>
</feature>
<feature type="binding site" evidence="3">
    <location>
        <position position="711"/>
    </location>
    <ligand>
        <name>Zn(2+)</name>
        <dbReference type="ChEBI" id="CHEBI:29105"/>
        <label>2</label>
    </ligand>
</feature>
<feature type="binding site" evidence="3">
    <location>
        <position position="716"/>
    </location>
    <ligand>
        <name>Zn(2+)</name>
        <dbReference type="ChEBI" id="CHEBI:29105"/>
        <label>1</label>
    </ligand>
</feature>
<feature type="modified residue" description="Phosphotyrosine" evidence="6">
    <location>
        <position position="53"/>
    </location>
</feature>
<feature type="modified residue" description="Phosphoserine" evidence="6">
    <location>
        <position position="58"/>
    </location>
</feature>
<feature type="modified residue" description="Phosphoserine" evidence="6">
    <location>
        <position position="79"/>
    </location>
</feature>
<feature type="sequence conflict" description="In Ref. 3; AAQ22410." evidence="7" ref="3">
    <original>Q</original>
    <variation>L</variation>
    <location>
        <position position="469"/>
    </location>
</feature>
<feature type="sequence conflict" description="In Ref. 3; AAQ22410." evidence="7" ref="3">
    <original>N</original>
    <variation>T</variation>
    <location>
        <position position="950"/>
    </location>
</feature>
<sequence>MSTAVETGSSPAKSNSNNSSSGGNNNNGNGNLSPNAKGVQRRQLRERKQRKLYLEEWSLGDEDGEGTRGFSVAEKLESSKFAQAGMVREMRGCDLTVAFLQQHGFNIPLLFRDKAGLGLRMPDPQEFTVNDVRLCVGSRRLLDVMDVNTQKNLQMTMKEWQQYYDSPQKDRLLNVISLEFSHTRLDRFVQSPEIVRQIDWVDVVWPKQLKDAQREGTNLLGGMMYPKVQKYCLMSVKNCYTDFHIDFGGTSVWYHILRGSKVFWLIPPTDRNLQLYEKWVLSGKQADIFFGDTVEKCARVYLTAGNTFFIPTGWIHAVYTPTQSLVFGGNFLHSFGIVKQLKTASVEDSTKVPQKFRYPFFTEMLWYVLARYVHTLLGHSHLEGEASLSEDEMAARPHTHLTHHELFGLKEIVMYLYDLPPQKKNVPSLVLDPVALIKDVRSLVERHCKDQQDLAITGVSVLKSPPGSQPPFLLYDRTRVKQEIKQEIARKNAEVIREQQQLEAGRAREAESDTSQSTGVGSVIGMGAGVEYSNGVMKKEQLENGSGVTVGGHGSQPEATFALPTDTLKYRPPKKMHLATALVAAAASSSSGGGGPVAGVGGSAVVGSSHSPTGGGVGPVTGAGGAISVIATSSSYIEGGQVGGILNMDNCHSPEGGGAKLSPNLTGTGQPRRRRTRCKNCAACQRSDCGTCPFCMDMVKFGGPGRAKQTCMMRQCLSPMLPVTAQCVYCHLDGWRQTPVSPQTKQLASADGPSALMECSVCYEIAHPDCALSQLDGTEDAADAKGIVNEDLPNSWECPSCCRSGKNYDYKPRHFRARQKSSEVRRVSVSHGQGGAEGHADGNTLLPPPVGQYNDFVFTSESEMESGTVSGHMTHWKHGMKRHHQLEVKTERNNSCDTPSPGISPNAIGGDSKVGKRRKSDDGTSVSSSMHESNDAPCGSSAEGAGGAGNANVSTNQWSGSGGGGGSRKKNSIRSQLAQQMLNSSTRVLKKPQYVVRPASGTGSSSSSGNGGSASATNGISNGSNQSGANSCGAGNGERGTNNGGLSGSNGLGNQHYSSSQNLALDPTVLKIIFRYLPQDTLVTCCSVCKVWSNAAVDPDLWKKMNCSEHKMSASLLTAIVRRQPEHLILDWTQIAKRQLAWLVARLPALKNLSLQNCPIQAVLALHTCLCPPLQTLDLSFVRGLNDAAIRDILSPPKDSRPGLSDSKTRLRDLKVMKLAGTDISDVAVRYITQSLPYLRHLDLSSCQRITDAGVAQIGTSTTATARLTELNLSACRLVSENALEHLAKCEGLIWLDLRHVPQVSTQSVIRFASNSKHDLCVRDIKLVERRRRNSTTANRSWHHD</sequence>
<accession>Q9VHH9</accession>
<accession>Q7YU79</accession>
<name>JHD1_DROME</name>
<dbReference type="EC" id="1.14.11.27" evidence="2"/>
<dbReference type="EMBL" id="AE014297">
    <property type="protein sequence ID" value="AAF54335.2"/>
    <property type="molecule type" value="Genomic_DNA"/>
</dbReference>
<dbReference type="EMBL" id="BT009941">
    <property type="protein sequence ID" value="AAQ22410.1"/>
    <property type="molecule type" value="mRNA"/>
</dbReference>
<dbReference type="RefSeq" id="NP_001262400.1">
    <property type="nucleotide sequence ID" value="NM_001275471.1"/>
</dbReference>
<dbReference type="RefSeq" id="NP_001262401.1">
    <property type="nucleotide sequence ID" value="NM_001275472.1"/>
</dbReference>
<dbReference type="RefSeq" id="NP_001262402.1">
    <property type="nucleotide sequence ID" value="NM_001275473.1"/>
</dbReference>
<dbReference type="RefSeq" id="NP_649864.2">
    <property type="nucleotide sequence ID" value="NM_141607.3"/>
</dbReference>
<dbReference type="SMR" id="Q9VHH9"/>
<dbReference type="BioGRID" id="66257">
    <property type="interactions" value="11"/>
</dbReference>
<dbReference type="ComplexPortal" id="CPX-2427">
    <property type="entry name" value="dRING-associated factors complex"/>
</dbReference>
<dbReference type="FunCoup" id="Q9VHH9">
    <property type="interactions" value="1236"/>
</dbReference>
<dbReference type="IntAct" id="Q9VHH9">
    <property type="interactions" value="31"/>
</dbReference>
<dbReference type="STRING" id="7227.FBpp0307736"/>
<dbReference type="iPTMnet" id="Q9VHH9"/>
<dbReference type="PaxDb" id="7227-FBpp0289915"/>
<dbReference type="EnsemblMetazoa" id="FBtr0300691">
    <property type="protein sequence ID" value="FBpp0289915"/>
    <property type="gene ID" value="FBgn0037659"/>
</dbReference>
<dbReference type="EnsemblMetazoa" id="FBtr0336758">
    <property type="protein sequence ID" value="FBpp0307734"/>
    <property type="gene ID" value="FBgn0037659"/>
</dbReference>
<dbReference type="EnsemblMetazoa" id="FBtr0336759">
    <property type="protein sequence ID" value="FBpp0307735"/>
    <property type="gene ID" value="FBgn0037659"/>
</dbReference>
<dbReference type="EnsemblMetazoa" id="FBtr0336760">
    <property type="protein sequence ID" value="FBpp0307736"/>
    <property type="gene ID" value="FBgn0037659"/>
</dbReference>
<dbReference type="GeneID" id="41090"/>
<dbReference type="KEGG" id="dme:Dmel_CG11033"/>
<dbReference type="UCSC" id="CG11033-RA">
    <property type="organism name" value="d. melanogaster"/>
</dbReference>
<dbReference type="AGR" id="FB:FBgn0037659"/>
<dbReference type="CTD" id="41090"/>
<dbReference type="FlyBase" id="FBgn0037659">
    <property type="gene designation" value="Kdm2"/>
</dbReference>
<dbReference type="VEuPathDB" id="VectorBase:FBgn0037659"/>
<dbReference type="eggNOG" id="KOG1633">
    <property type="taxonomic scope" value="Eukaryota"/>
</dbReference>
<dbReference type="eggNOG" id="KOG1947">
    <property type="taxonomic scope" value="Eukaryota"/>
</dbReference>
<dbReference type="GeneTree" id="ENSGT00940000167551"/>
<dbReference type="HOGENOM" id="CLU_003540_0_0_1"/>
<dbReference type="InParanoid" id="Q9VHH9"/>
<dbReference type="OMA" id="HTHLTHY"/>
<dbReference type="OrthoDB" id="5876800at2759"/>
<dbReference type="PhylomeDB" id="Q9VHH9"/>
<dbReference type="BRENDA" id="1.14.11.27">
    <property type="organism ID" value="1994"/>
</dbReference>
<dbReference type="SignaLink" id="Q9VHH9"/>
<dbReference type="BioGRID-ORCS" id="41090">
    <property type="hits" value="0 hits in 3 CRISPR screens"/>
</dbReference>
<dbReference type="GenomeRNAi" id="41090"/>
<dbReference type="PRO" id="PR:Q9VHH9"/>
<dbReference type="Proteomes" id="UP000000803">
    <property type="component" value="Chromosome 3R"/>
</dbReference>
<dbReference type="Bgee" id="FBgn0037659">
    <property type="expression patterns" value="Expressed in eye disc (Drosophila) and 203 other cell types or tissues"/>
</dbReference>
<dbReference type="ExpressionAtlas" id="Q9VHH9">
    <property type="expression patterns" value="baseline and differential"/>
</dbReference>
<dbReference type="GO" id="GO:0005634">
    <property type="term" value="C:nucleus"/>
    <property type="evidence" value="ECO:0000314"/>
    <property type="project" value="FlyBase"/>
</dbReference>
<dbReference type="GO" id="GO:0031519">
    <property type="term" value="C:PcG protein complex"/>
    <property type="evidence" value="ECO:0000353"/>
    <property type="project" value="FlyBase"/>
</dbReference>
<dbReference type="GO" id="GO:0019005">
    <property type="term" value="C:SCF ubiquitin ligase complex"/>
    <property type="evidence" value="ECO:0000255"/>
    <property type="project" value="FlyBase"/>
</dbReference>
<dbReference type="GO" id="GO:0003677">
    <property type="term" value="F:DNA binding"/>
    <property type="evidence" value="ECO:0007669"/>
    <property type="project" value="InterPro"/>
</dbReference>
<dbReference type="GO" id="GO:0032452">
    <property type="term" value="F:histone demethylase activity"/>
    <property type="evidence" value="ECO:0000318"/>
    <property type="project" value="GO_Central"/>
</dbReference>
<dbReference type="GO" id="GO:0051864">
    <property type="term" value="F:histone H3K36 demethylase activity"/>
    <property type="evidence" value="ECO:0000250"/>
    <property type="project" value="FlyBase"/>
</dbReference>
<dbReference type="GO" id="GO:0140680">
    <property type="term" value="F:histone H3K36me/H3K36me2 demethylase activity"/>
    <property type="evidence" value="ECO:0007669"/>
    <property type="project" value="UniProtKB-EC"/>
</dbReference>
<dbReference type="GO" id="GO:0034647">
    <property type="term" value="F:histone H3K4me/H3K4me2/H3K4me3 demethylase activity"/>
    <property type="evidence" value="ECO:0000315"/>
    <property type="project" value="FlyBase"/>
</dbReference>
<dbReference type="GO" id="GO:0003712">
    <property type="term" value="F:transcription coregulator activity"/>
    <property type="evidence" value="ECO:0000318"/>
    <property type="project" value="GO_Central"/>
</dbReference>
<dbReference type="GO" id="GO:0008270">
    <property type="term" value="F:zinc ion binding"/>
    <property type="evidence" value="ECO:0007669"/>
    <property type="project" value="UniProtKB-KW"/>
</dbReference>
<dbReference type="GO" id="GO:0006338">
    <property type="term" value="P:chromatin remodeling"/>
    <property type="evidence" value="ECO:0000318"/>
    <property type="project" value="GO_Central"/>
</dbReference>
<dbReference type="GO" id="GO:0048512">
    <property type="term" value="P:circadian behavior"/>
    <property type="evidence" value="ECO:0000315"/>
    <property type="project" value="UniProtKB"/>
</dbReference>
<dbReference type="GO" id="GO:0007526">
    <property type="term" value="P:larval somatic muscle development"/>
    <property type="evidence" value="ECO:0000315"/>
    <property type="project" value="FlyBase"/>
</dbReference>
<dbReference type="GO" id="GO:0006357">
    <property type="term" value="P:regulation of transcription by RNA polymerase II"/>
    <property type="evidence" value="ECO:0000318"/>
    <property type="project" value="GO_Central"/>
</dbReference>
<dbReference type="GO" id="GO:0031146">
    <property type="term" value="P:SCF-dependent proteasomal ubiquitin-dependent protein catabolic process"/>
    <property type="evidence" value="ECO:0000255"/>
    <property type="project" value="FlyBase"/>
</dbReference>
<dbReference type="GO" id="GO:0007379">
    <property type="term" value="P:segment specification"/>
    <property type="evidence" value="ECO:0000316"/>
    <property type="project" value="FlyBase"/>
</dbReference>
<dbReference type="CDD" id="cd21783">
    <property type="entry name" value="CTD_Jhd1-like"/>
    <property type="match status" value="1"/>
</dbReference>
<dbReference type="CDD" id="cd15555">
    <property type="entry name" value="PHD_KDM2A_2B"/>
    <property type="match status" value="1"/>
</dbReference>
<dbReference type="FunFam" id="2.60.120.650:FF:000005">
    <property type="entry name" value="lysine-specific demethylase 2A isoform X1"/>
    <property type="match status" value="1"/>
</dbReference>
<dbReference type="Gene3D" id="1.20.1280.50">
    <property type="match status" value="1"/>
</dbReference>
<dbReference type="Gene3D" id="1.20.58.1360">
    <property type="match status" value="1"/>
</dbReference>
<dbReference type="Gene3D" id="2.60.120.650">
    <property type="entry name" value="Cupin"/>
    <property type="match status" value="1"/>
</dbReference>
<dbReference type="Gene3D" id="3.80.10.10">
    <property type="entry name" value="Ribonuclease Inhibitor"/>
    <property type="match status" value="2"/>
</dbReference>
<dbReference type="Gene3D" id="3.30.40.10">
    <property type="entry name" value="Zinc/RING finger domain, C3HC4 (zinc finger)"/>
    <property type="match status" value="1"/>
</dbReference>
<dbReference type="InterPro" id="IPR001810">
    <property type="entry name" value="F-box_dom"/>
</dbReference>
<dbReference type="InterPro" id="IPR050690">
    <property type="entry name" value="JHDM1_Histone_Demethylase"/>
</dbReference>
<dbReference type="InterPro" id="IPR003347">
    <property type="entry name" value="JmjC_dom"/>
</dbReference>
<dbReference type="InterPro" id="IPR001611">
    <property type="entry name" value="Leu-rich_rpt"/>
</dbReference>
<dbReference type="InterPro" id="IPR006553">
    <property type="entry name" value="Leu-rich_rpt_Cys-con_subtyp"/>
</dbReference>
<dbReference type="InterPro" id="IPR032675">
    <property type="entry name" value="LRR_dom_sf"/>
</dbReference>
<dbReference type="InterPro" id="IPR002857">
    <property type="entry name" value="Znf_CXXC"/>
</dbReference>
<dbReference type="InterPro" id="IPR019787">
    <property type="entry name" value="Znf_PHD-finger"/>
</dbReference>
<dbReference type="InterPro" id="IPR013083">
    <property type="entry name" value="Znf_RING/FYVE/PHD"/>
</dbReference>
<dbReference type="PANTHER" id="PTHR23123">
    <property type="entry name" value="PHD/F-BOX CONTAINING PROTEIN"/>
    <property type="match status" value="1"/>
</dbReference>
<dbReference type="Pfam" id="PF12937">
    <property type="entry name" value="F-box-like"/>
    <property type="match status" value="1"/>
</dbReference>
<dbReference type="Pfam" id="PF13516">
    <property type="entry name" value="LRR_6"/>
    <property type="match status" value="1"/>
</dbReference>
<dbReference type="Pfam" id="PF16866">
    <property type="entry name" value="PHD_4"/>
    <property type="match status" value="1"/>
</dbReference>
<dbReference type="Pfam" id="PF02008">
    <property type="entry name" value="zf-CXXC"/>
    <property type="match status" value="1"/>
</dbReference>
<dbReference type="SMART" id="SM00256">
    <property type="entry name" value="FBOX"/>
    <property type="match status" value="1"/>
</dbReference>
<dbReference type="SMART" id="SM00558">
    <property type="entry name" value="JmjC"/>
    <property type="match status" value="1"/>
</dbReference>
<dbReference type="SMART" id="SM00367">
    <property type="entry name" value="LRR_CC"/>
    <property type="match status" value="5"/>
</dbReference>
<dbReference type="SUPFAM" id="SSF51197">
    <property type="entry name" value="Clavaminate synthase-like"/>
    <property type="match status" value="1"/>
</dbReference>
<dbReference type="SUPFAM" id="SSF52047">
    <property type="entry name" value="RNI-like"/>
    <property type="match status" value="1"/>
</dbReference>
<dbReference type="SUPFAM" id="SSF57802">
    <property type="entry name" value="Rubredoxin-like"/>
    <property type="match status" value="1"/>
</dbReference>
<dbReference type="PROSITE" id="PS51184">
    <property type="entry name" value="JMJC"/>
    <property type="match status" value="1"/>
</dbReference>
<dbReference type="PROSITE" id="PS51058">
    <property type="entry name" value="ZF_CXXC"/>
    <property type="match status" value="1"/>
</dbReference>
<organism>
    <name type="scientific">Drosophila melanogaster</name>
    <name type="common">Fruit fly</name>
    <dbReference type="NCBI Taxonomy" id="7227"/>
    <lineage>
        <taxon>Eukaryota</taxon>
        <taxon>Metazoa</taxon>
        <taxon>Ecdysozoa</taxon>
        <taxon>Arthropoda</taxon>
        <taxon>Hexapoda</taxon>
        <taxon>Insecta</taxon>
        <taxon>Pterygota</taxon>
        <taxon>Neoptera</taxon>
        <taxon>Endopterygota</taxon>
        <taxon>Diptera</taxon>
        <taxon>Brachycera</taxon>
        <taxon>Muscomorpha</taxon>
        <taxon>Ephydroidea</taxon>
        <taxon>Drosophilidae</taxon>
        <taxon>Drosophila</taxon>
        <taxon>Sophophora</taxon>
    </lineage>
</organism>
<gene>
    <name type="primary">Kdm2</name>
    <name type="synonym">Jhd1</name>
    <name type="ORF">CG11033</name>
</gene>
<keyword id="KW-0156">Chromatin regulator</keyword>
<keyword id="KW-0223">Dioxygenase</keyword>
<keyword id="KW-0408">Iron</keyword>
<keyword id="KW-0479">Metal-binding</keyword>
<keyword id="KW-0539">Nucleus</keyword>
<keyword id="KW-0560">Oxidoreductase</keyword>
<keyword id="KW-0597">Phosphoprotein</keyword>
<keyword id="KW-1185">Reference proteome</keyword>
<keyword id="KW-0804">Transcription</keyword>
<keyword id="KW-0805">Transcription regulation</keyword>
<keyword id="KW-0862">Zinc</keyword>
<keyword id="KW-0863">Zinc-finger</keyword>
<protein>
    <recommendedName>
        <fullName>JmjC domain-containing histone demethylation protein 1</fullName>
        <ecNumber evidence="2">1.14.11.27</ecNumber>
    </recommendedName>
    <alternativeName>
        <fullName>Lysine (K)-specific demethylase 2</fullName>
    </alternativeName>
    <alternativeName>
        <fullName>[Histone-H3]-lysine-36 demethylase 1</fullName>
    </alternativeName>
</protein>
<comment type="function">
    <text evidence="2">Histone demethylase that specifically demethylates 'Lys-36' of histone H3, thereby playing a central role in histone code.</text>
</comment>
<comment type="catalytic activity">
    <reaction evidence="2">
        <text>N(6),N(6)-dimethyl-L-lysyl(36)-[histone H3] + 2 2-oxoglutarate + 2 O2 = L-lysyl(36)-[histone H3] + 2 formaldehyde + 2 succinate + 2 CO2</text>
        <dbReference type="Rhea" id="RHEA:42032"/>
        <dbReference type="Rhea" id="RHEA-COMP:9785"/>
        <dbReference type="Rhea" id="RHEA-COMP:9787"/>
        <dbReference type="ChEBI" id="CHEBI:15379"/>
        <dbReference type="ChEBI" id="CHEBI:16526"/>
        <dbReference type="ChEBI" id="CHEBI:16810"/>
        <dbReference type="ChEBI" id="CHEBI:16842"/>
        <dbReference type="ChEBI" id="CHEBI:29969"/>
        <dbReference type="ChEBI" id="CHEBI:30031"/>
        <dbReference type="ChEBI" id="CHEBI:61976"/>
        <dbReference type="EC" id="1.14.11.27"/>
    </reaction>
</comment>
<comment type="cofactor">
    <cofactor evidence="1">
        <name>Fe(2+)</name>
        <dbReference type="ChEBI" id="CHEBI:29033"/>
    </cofactor>
    <text evidence="1">Binds 1 Fe(2+) ion per subunit.</text>
</comment>
<comment type="subcellular location">
    <subcellularLocation>
        <location evidence="1">Nucleus</location>
    </subcellularLocation>
</comment>
<comment type="domain">
    <text evidence="1">The JmjC domain mediates the demethylation activity.</text>
</comment>
<comment type="similarity">
    <text evidence="7">Belongs to the JHDM1 histone demethylase family.</text>
</comment>
<evidence type="ECO:0000250" key="1"/>
<evidence type="ECO:0000250" key="2">
    <source>
        <dbReference type="UniProtKB" id="P40034"/>
    </source>
</evidence>
<evidence type="ECO:0000255" key="3">
    <source>
        <dbReference type="PROSITE-ProRule" id="PRU00509"/>
    </source>
</evidence>
<evidence type="ECO:0000255" key="4">
    <source>
        <dbReference type="PROSITE-ProRule" id="PRU00538"/>
    </source>
</evidence>
<evidence type="ECO:0000256" key="5">
    <source>
        <dbReference type="SAM" id="MobiDB-lite"/>
    </source>
</evidence>
<evidence type="ECO:0000269" key="6">
    <source>
    </source>
</evidence>
<evidence type="ECO:0000305" key="7"/>